<evidence type="ECO:0000255" key="1">
    <source>
        <dbReference type="HAMAP-Rule" id="MF_00352"/>
    </source>
</evidence>
<evidence type="ECO:0000256" key="2">
    <source>
        <dbReference type="SAM" id="MobiDB-lite"/>
    </source>
</evidence>
<sequence length="560" mass="63976">MTILLEEKEKLTFECETGNYHTFCPISCVSWLYQKIEDSFFLVIGTKTCGYFLQNALGVMIFAEPRYAMAELEESDISAKLNDYKELKRLCFQIKEDRNPSVIVWIGTCTTEIIKMDLEGMAPELERELGIPIVVARANGLDYAFTQGEDTVLAAMAQRCPSLPLNVEEKSQNSLFNQSSNSPENLKTLNTKKDTFQNSTENSKTFSAEKKKTQNPFEFFKSLEEFFPSFSIQNNKKETILSKNSFVPFVEVEKNMYPLESSENSKAESFYHLLREGEQTNQNSELVKPKLVLFGSLPNTVATQLKLELNRQGIEISGWLPSTRYSDLPILDTNTYVCGVNPFLSRTATTLMRRRKCKLISAPFPIGPDGTKAWIEKICSIYGKKPIGLEERETKIWEGLEDSLKLVRGKSVFFMGDNLLEISLARFLIRCGMIVYEIGIPYLDQRFQAAELALLEKTCFEMNVPVPRIVEKPDNYYQISRIRELQPDLVITGMAHANPLEARNITTKWSVEFTFAQIHGFTNAREILDLVTRPLRRNQNINSFSEFFGSTTSTFVQNQF</sequence>
<accession>Q1KVX6</accession>
<comment type="function">
    <text evidence="1">Component of the dark-operative protochlorophyllide reductase (DPOR) that uses Mg-ATP and reduced ferredoxin to reduce ring D of protochlorophyllide (Pchlide) to form chlorophyllide a (Chlide). This reaction is light-independent. The NB-protein (ChlN-ChlB) is the catalytic component of the complex.</text>
</comment>
<comment type="catalytic activity">
    <reaction evidence="1">
        <text>chlorophyllide a + oxidized 2[4Fe-4S]-[ferredoxin] + 2 ADP + 2 phosphate = protochlorophyllide a + reduced 2[4Fe-4S]-[ferredoxin] + 2 ATP + 2 H2O</text>
        <dbReference type="Rhea" id="RHEA:28202"/>
        <dbReference type="Rhea" id="RHEA-COMP:10002"/>
        <dbReference type="Rhea" id="RHEA-COMP:10004"/>
        <dbReference type="ChEBI" id="CHEBI:15377"/>
        <dbReference type="ChEBI" id="CHEBI:30616"/>
        <dbReference type="ChEBI" id="CHEBI:33722"/>
        <dbReference type="ChEBI" id="CHEBI:33723"/>
        <dbReference type="ChEBI" id="CHEBI:43474"/>
        <dbReference type="ChEBI" id="CHEBI:83348"/>
        <dbReference type="ChEBI" id="CHEBI:83350"/>
        <dbReference type="ChEBI" id="CHEBI:456216"/>
        <dbReference type="EC" id="1.3.7.7"/>
    </reaction>
</comment>
<comment type="cofactor">
    <cofactor evidence="1">
        <name>[4Fe-4S] cluster</name>
        <dbReference type="ChEBI" id="CHEBI:49883"/>
    </cofactor>
    <text evidence="1">Binds 1 [4Fe-4S] cluster per heterodimer. The cluster is bound at the heterodimer interface by residues from both subunits.</text>
</comment>
<comment type="pathway">
    <text evidence="1">Porphyrin-containing compound metabolism; chlorophyll biosynthesis (light-independent).</text>
</comment>
<comment type="subunit">
    <text evidence="1">Protochlorophyllide reductase is composed of three subunits; ChlL, ChlN and ChlB. Forms a heterotetramer of two ChlB and two ChlN subunits.</text>
</comment>
<comment type="subcellular location">
    <subcellularLocation>
        <location>Plastid</location>
        <location>Chloroplast</location>
    </subcellularLocation>
</comment>
<comment type="similarity">
    <text evidence="1">Belongs to the BchN/ChlN family.</text>
</comment>
<reference key="1">
    <citation type="journal article" date="2006" name="BMC Evol. Biol.">
        <title>The complete chloroplast genome sequence of the chlorophycean green alga Scenedesmus obliquus reveals a compact gene organization and a biased distribution of genes on the two DNA strands.</title>
        <authorList>
            <person name="de Cambiaire J.-C."/>
            <person name="Otis C."/>
            <person name="Lemieux C."/>
            <person name="Turmel M."/>
        </authorList>
    </citation>
    <scope>NUCLEOTIDE SEQUENCE [LARGE SCALE GENOMIC DNA]</scope>
    <source>
        <strain>UTEX 393</strain>
    </source>
</reference>
<feature type="chain" id="PRO_0000324039" description="Light-independent protochlorophyllide reductase subunit N">
    <location>
        <begin position="1"/>
        <end position="560"/>
    </location>
</feature>
<feature type="region of interest" description="Disordered" evidence="2">
    <location>
        <begin position="173"/>
        <end position="210"/>
    </location>
</feature>
<feature type="compositionally biased region" description="Low complexity" evidence="2">
    <location>
        <begin position="173"/>
        <end position="182"/>
    </location>
</feature>
<feature type="compositionally biased region" description="Polar residues" evidence="2">
    <location>
        <begin position="196"/>
        <end position="206"/>
    </location>
</feature>
<feature type="binding site" evidence="1">
    <location>
        <position position="24"/>
    </location>
    <ligand>
        <name>[4Fe-4S] cluster</name>
        <dbReference type="ChEBI" id="CHEBI:49883"/>
        <note>ligand shared with heterodimeric partner</note>
    </ligand>
</feature>
<feature type="binding site" evidence="1">
    <location>
        <position position="49"/>
    </location>
    <ligand>
        <name>[4Fe-4S] cluster</name>
        <dbReference type="ChEBI" id="CHEBI:49883"/>
        <note>ligand shared with heterodimeric partner</note>
    </ligand>
</feature>
<feature type="binding site" evidence="1">
    <location>
        <position position="109"/>
    </location>
    <ligand>
        <name>[4Fe-4S] cluster</name>
        <dbReference type="ChEBI" id="CHEBI:49883"/>
        <note>ligand shared with heterodimeric partner</note>
    </ligand>
</feature>
<geneLocation type="chloroplast"/>
<proteinExistence type="inferred from homology"/>
<organism>
    <name type="scientific">Tetradesmus obliquus</name>
    <name type="common">Green alga</name>
    <name type="synonym">Acutodesmus obliquus</name>
    <dbReference type="NCBI Taxonomy" id="3088"/>
    <lineage>
        <taxon>Eukaryota</taxon>
        <taxon>Viridiplantae</taxon>
        <taxon>Chlorophyta</taxon>
        <taxon>core chlorophytes</taxon>
        <taxon>Chlorophyceae</taxon>
        <taxon>CS clade</taxon>
        <taxon>Sphaeropleales</taxon>
        <taxon>Scenedesmaceae</taxon>
        <taxon>Tetradesmus</taxon>
    </lineage>
</organism>
<name>CHLN_TETOB</name>
<protein>
    <recommendedName>
        <fullName evidence="1">Light-independent protochlorophyllide reductase subunit N</fullName>
        <shortName evidence="1">DPOR subunit N</shortName>
        <shortName evidence="1">LI-POR subunit N</shortName>
        <ecNumber evidence="1">1.3.7.7</ecNumber>
    </recommendedName>
</protein>
<dbReference type="EC" id="1.3.7.7" evidence="1"/>
<dbReference type="EMBL" id="DQ396875">
    <property type="protein sequence ID" value="ABD48230.1"/>
    <property type="molecule type" value="Genomic_DNA"/>
</dbReference>
<dbReference type="RefSeq" id="YP_635948.1">
    <property type="nucleotide sequence ID" value="NC_008101.1"/>
</dbReference>
<dbReference type="SMR" id="Q1KVX6"/>
<dbReference type="GeneID" id="4099815"/>
<dbReference type="UniPathway" id="UPA00670"/>
<dbReference type="GO" id="GO:0009507">
    <property type="term" value="C:chloroplast"/>
    <property type="evidence" value="ECO:0007669"/>
    <property type="project" value="UniProtKB-SubCell"/>
</dbReference>
<dbReference type="GO" id="GO:0051539">
    <property type="term" value="F:4 iron, 4 sulfur cluster binding"/>
    <property type="evidence" value="ECO:0007669"/>
    <property type="project" value="UniProtKB-UniRule"/>
</dbReference>
<dbReference type="GO" id="GO:0005524">
    <property type="term" value="F:ATP binding"/>
    <property type="evidence" value="ECO:0007669"/>
    <property type="project" value="UniProtKB-UniRule"/>
</dbReference>
<dbReference type="GO" id="GO:0046872">
    <property type="term" value="F:metal ion binding"/>
    <property type="evidence" value="ECO:0007669"/>
    <property type="project" value="UniProtKB-KW"/>
</dbReference>
<dbReference type="GO" id="GO:0016730">
    <property type="term" value="F:oxidoreductase activity, acting on iron-sulfur proteins as donors"/>
    <property type="evidence" value="ECO:0007669"/>
    <property type="project" value="InterPro"/>
</dbReference>
<dbReference type="GO" id="GO:0016636">
    <property type="term" value="F:oxidoreductase activity, acting on the CH-CH group of donors, iron-sulfur protein as acceptor"/>
    <property type="evidence" value="ECO:0007669"/>
    <property type="project" value="UniProtKB-UniRule"/>
</dbReference>
<dbReference type="GO" id="GO:0036068">
    <property type="term" value="P:light-independent chlorophyll biosynthetic process"/>
    <property type="evidence" value="ECO:0007669"/>
    <property type="project" value="UniProtKB-UniRule"/>
</dbReference>
<dbReference type="GO" id="GO:0019685">
    <property type="term" value="P:photosynthesis, dark reaction"/>
    <property type="evidence" value="ECO:0007669"/>
    <property type="project" value="InterPro"/>
</dbReference>
<dbReference type="CDD" id="cd01979">
    <property type="entry name" value="Pchlide_reductase_N"/>
    <property type="match status" value="1"/>
</dbReference>
<dbReference type="Gene3D" id="3.40.50.1980">
    <property type="entry name" value="Nitrogenase molybdenum iron protein domain"/>
    <property type="match status" value="2"/>
</dbReference>
<dbReference type="HAMAP" id="MF_00352">
    <property type="entry name" value="ChlN_BchN"/>
    <property type="match status" value="1"/>
</dbReference>
<dbReference type="InterPro" id="IPR050293">
    <property type="entry name" value="LIPOR_BchN/ChlN"/>
</dbReference>
<dbReference type="InterPro" id="IPR000510">
    <property type="entry name" value="Nase/OxRdtase_comp1"/>
</dbReference>
<dbReference type="InterPro" id="IPR005970">
    <property type="entry name" value="Protochl_reductN"/>
</dbReference>
<dbReference type="NCBIfam" id="TIGR01279">
    <property type="entry name" value="DPOR_bchN"/>
    <property type="match status" value="1"/>
</dbReference>
<dbReference type="NCBIfam" id="NF002768">
    <property type="entry name" value="PRK02842.1"/>
    <property type="match status" value="1"/>
</dbReference>
<dbReference type="PANTHER" id="PTHR39429">
    <property type="entry name" value="LIGHT-INDEPENDENT PROTOCHLOROPHYLLIDE REDUCTASE SUBUNIT N"/>
    <property type="match status" value="1"/>
</dbReference>
<dbReference type="PANTHER" id="PTHR39429:SF3">
    <property type="entry name" value="LIGHT-INDEPENDENT PROTOCHLOROPHYLLIDE REDUCTASE SUBUNIT N"/>
    <property type="match status" value="1"/>
</dbReference>
<dbReference type="Pfam" id="PF00148">
    <property type="entry name" value="Oxidored_nitro"/>
    <property type="match status" value="2"/>
</dbReference>
<dbReference type="SUPFAM" id="SSF53807">
    <property type="entry name" value="Helical backbone' metal receptor"/>
    <property type="match status" value="1"/>
</dbReference>
<keyword id="KW-0004">4Fe-4S</keyword>
<keyword id="KW-0067">ATP-binding</keyword>
<keyword id="KW-0149">Chlorophyll biosynthesis</keyword>
<keyword id="KW-0150">Chloroplast</keyword>
<keyword id="KW-0408">Iron</keyword>
<keyword id="KW-0411">Iron-sulfur</keyword>
<keyword id="KW-0479">Metal-binding</keyword>
<keyword id="KW-0547">Nucleotide-binding</keyword>
<keyword id="KW-0560">Oxidoreductase</keyword>
<keyword id="KW-0602">Photosynthesis</keyword>
<keyword id="KW-0934">Plastid</keyword>
<gene>
    <name evidence="1" type="primary">chlN</name>
</gene>